<proteinExistence type="inferred from homology"/>
<evidence type="ECO:0000255" key="1">
    <source>
        <dbReference type="HAMAP-Rule" id="MF_01588"/>
    </source>
</evidence>
<name>DNLJ_LYSSC</name>
<protein>
    <recommendedName>
        <fullName evidence="1">DNA ligase</fullName>
        <ecNumber evidence="1">6.5.1.2</ecNumber>
    </recommendedName>
    <alternativeName>
        <fullName evidence="1">Polydeoxyribonucleotide synthase [NAD(+)]</fullName>
    </alternativeName>
</protein>
<comment type="function">
    <text evidence="1">DNA ligase that catalyzes the formation of phosphodiester linkages between 5'-phosphoryl and 3'-hydroxyl groups in double-stranded DNA using NAD as a coenzyme and as the energy source for the reaction. It is essential for DNA replication and repair of damaged DNA.</text>
</comment>
<comment type="catalytic activity">
    <reaction evidence="1">
        <text>NAD(+) + (deoxyribonucleotide)n-3'-hydroxyl + 5'-phospho-(deoxyribonucleotide)m = (deoxyribonucleotide)n+m + AMP + beta-nicotinamide D-nucleotide.</text>
        <dbReference type="EC" id="6.5.1.2"/>
    </reaction>
</comment>
<comment type="cofactor">
    <cofactor evidence="1">
        <name>Mg(2+)</name>
        <dbReference type="ChEBI" id="CHEBI:18420"/>
    </cofactor>
    <cofactor evidence="1">
        <name>Mn(2+)</name>
        <dbReference type="ChEBI" id="CHEBI:29035"/>
    </cofactor>
</comment>
<comment type="similarity">
    <text evidence="1">Belongs to the NAD-dependent DNA ligase family. LigA subfamily.</text>
</comment>
<gene>
    <name evidence="1" type="primary">ligA</name>
    <name type="ordered locus">Bsph_0226</name>
</gene>
<sequence length="667" mass="73732">MNEIEQRIAELNKLLHEYGYAYYVLDKPVVADSVYDQLLHELIALEEANPSLIFPDSPTQRVGGTVVEGFKKVTHDYPMLSLSNAFNEADLQEFDRKVRQAIGDHFSYVCELKIDGLAISLKYENGVFVQGATRGDGVVGEEITANLKTIHAIPLRLKEPITIEVRGEAYMPKKSFEKLNAQRADNGEELFANPRNAAAGSLRQLDPKIAASRQLSTFIYAIGGDGEIYGIDGHAEMLDYLEDLGFPSNKERQRCSTIEEVMAFIEHWTENRPHLAYEIDGIVIKVDRYAQQDELGYTAKSPRWAIAYKFPAEEVVTTLLDIDLTVGRTGVVTPTAILTPVQVAGTTVQRASLHNEDLIRDKDIRLGDTVIIRKAGDIIPQVVGVLIEQRPENSVPFEMPKNCPVCDSELIRIEGEVALRCVNPACFAQIAESIKYFVSRNAMNIDGLGDKVVEQLLRADLIHDVSDLYHLTIEQLVELERMGEKSATNLVNAIQASKENSMERLLIGLGIRHVGEKAAKIVSEQFGSMEAVMAATEEQLVAIYEIGDKMASSLVEYFSNDDARAVIERLAEVGVNMTFKGKKVEVVVGDNPFAGKTIVLTGKLEQLTRNEAKAKIEELGGTVTGSVSKKTDLVIAGEDAGSKLAKAEQLGIEVWNEDNLIEQLNLI</sequence>
<dbReference type="EC" id="6.5.1.2" evidence="1"/>
<dbReference type="EMBL" id="CP000817">
    <property type="protein sequence ID" value="ACA37857.1"/>
    <property type="molecule type" value="Genomic_DNA"/>
</dbReference>
<dbReference type="RefSeq" id="WP_012292025.1">
    <property type="nucleotide sequence ID" value="NC_010382.1"/>
</dbReference>
<dbReference type="SMR" id="B1HTW6"/>
<dbReference type="EnsemblBacteria" id="ACA37857">
    <property type="protein sequence ID" value="ACA37857"/>
    <property type="gene ID" value="Bsph_0226"/>
</dbReference>
<dbReference type="KEGG" id="lsp:Bsph_0226"/>
<dbReference type="HOGENOM" id="CLU_007764_2_1_9"/>
<dbReference type="Proteomes" id="UP000002164">
    <property type="component" value="Chromosome"/>
</dbReference>
<dbReference type="GO" id="GO:0005829">
    <property type="term" value="C:cytosol"/>
    <property type="evidence" value="ECO:0007669"/>
    <property type="project" value="TreeGrafter"/>
</dbReference>
<dbReference type="GO" id="GO:0003677">
    <property type="term" value="F:DNA binding"/>
    <property type="evidence" value="ECO:0007669"/>
    <property type="project" value="InterPro"/>
</dbReference>
<dbReference type="GO" id="GO:0003911">
    <property type="term" value="F:DNA ligase (NAD+) activity"/>
    <property type="evidence" value="ECO:0007669"/>
    <property type="project" value="UniProtKB-UniRule"/>
</dbReference>
<dbReference type="GO" id="GO:0046872">
    <property type="term" value="F:metal ion binding"/>
    <property type="evidence" value="ECO:0007669"/>
    <property type="project" value="UniProtKB-KW"/>
</dbReference>
<dbReference type="GO" id="GO:0006281">
    <property type="term" value="P:DNA repair"/>
    <property type="evidence" value="ECO:0007669"/>
    <property type="project" value="UniProtKB-KW"/>
</dbReference>
<dbReference type="GO" id="GO:0006260">
    <property type="term" value="P:DNA replication"/>
    <property type="evidence" value="ECO:0007669"/>
    <property type="project" value="UniProtKB-KW"/>
</dbReference>
<dbReference type="CDD" id="cd17748">
    <property type="entry name" value="BRCT_DNA_ligase_like"/>
    <property type="match status" value="1"/>
</dbReference>
<dbReference type="CDD" id="cd00114">
    <property type="entry name" value="LIGANc"/>
    <property type="match status" value="1"/>
</dbReference>
<dbReference type="FunFam" id="1.10.150.20:FF:000006">
    <property type="entry name" value="DNA ligase"/>
    <property type="match status" value="1"/>
</dbReference>
<dbReference type="FunFam" id="1.10.150.20:FF:000007">
    <property type="entry name" value="DNA ligase"/>
    <property type="match status" value="1"/>
</dbReference>
<dbReference type="FunFam" id="1.10.287.610:FF:000002">
    <property type="entry name" value="DNA ligase"/>
    <property type="match status" value="1"/>
</dbReference>
<dbReference type="FunFam" id="2.40.50.140:FF:000012">
    <property type="entry name" value="DNA ligase"/>
    <property type="match status" value="1"/>
</dbReference>
<dbReference type="FunFam" id="3.30.470.30:FF:000001">
    <property type="entry name" value="DNA ligase"/>
    <property type="match status" value="1"/>
</dbReference>
<dbReference type="Gene3D" id="6.20.10.30">
    <property type="match status" value="1"/>
</dbReference>
<dbReference type="Gene3D" id="1.10.150.20">
    <property type="entry name" value="5' to 3' exonuclease, C-terminal subdomain"/>
    <property type="match status" value="2"/>
</dbReference>
<dbReference type="Gene3D" id="3.40.50.10190">
    <property type="entry name" value="BRCT domain"/>
    <property type="match status" value="1"/>
</dbReference>
<dbReference type="Gene3D" id="3.30.470.30">
    <property type="entry name" value="DNA ligase/mRNA capping enzyme"/>
    <property type="match status" value="1"/>
</dbReference>
<dbReference type="Gene3D" id="1.10.287.610">
    <property type="entry name" value="Helix hairpin bin"/>
    <property type="match status" value="1"/>
</dbReference>
<dbReference type="Gene3D" id="2.40.50.140">
    <property type="entry name" value="Nucleic acid-binding proteins"/>
    <property type="match status" value="1"/>
</dbReference>
<dbReference type="HAMAP" id="MF_01588">
    <property type="entry name" value="DNA_ligase_A"/>
    <property type="match status" value="1"/>
</dbReference>
<dbReference type="InterPro" id="IPR001357">
    <property type="entry name" value="BRCT_dom"/>
</dbReference>
<dbReference type="InterPro" id="IPR036420">
    <property type="entry name" value="BRCT_dom_sf"/>
</dbReference>
<dbReference type="InterPro" id="IPR041663">
    <property type="entry name" value="DisA/LigA_HHH"/>
</dbReference>
<dbReference type="InterPro" id="IPR001679">
    <property type="entry name" value="DNA_ligase"/>
</dbReference>
<dbReference type="InterPro" id="IPR018239">
    <property type="entry name" value="DNA_ligase_AS"/>
</dbReference>
<dbReference type="InterPro" id="IPR033136">
    <property type="entry name" value="DNA_ligase_CS"/>
</dbReference>
<dbReference type="InterPro" id="IPR013839">
    <property type="entry name" value="DNAligase_adenylation"/>
</dbReference>
<dbReference type="InterPro" id="IPR013840">
    <property type="entry name" value="DNAligase_N"/>
</dbReference>
<dbReference type="InterPro" id="IPR003583">
    <property type="entry name" value="Hlx-hairpin-Hlx_DNA-bd_motif"/>
</dbReference>
<dbReference type="InterPro" id="IPR012340">
    <property type="entry name" value="NA-bd_OB-fold"/>
</dbReference>
<dbReference type="InterPro" id="IPR004150">
    <property type="entry name" value="NAD_DNA_ligase_OB"/>
</dbReference>
<dbReference type="InterPro" id="IPR010994">
    <property type="entry name" value="RuvA_2-like"/>
</dbReference>
<dbReference type="InterPro" id="IPR004149">
    <property type="entry name" value="Znf_DNAligase_C4"/>
</dbReference>
<dbReference type="NCBIfam" id="TIGR00575">
    <property type="entry name" value="dnlj"/>
    <property type="match status" value="1"/>
</dbReference>
<dbReference type="NCBIfam" id="NF005932">
    <property type="entry name" value="PRK07956.1"/>
    <property type="match status" value="1"/>
</dbReference>
<dbReference type="PANTHER" id="PTHR23389">
    <property type="entry name" value="CHROMOSOME TRANSMISSION FIDELITY FACTOR 18"/>
    <property type="match status" value="1"/>
</dbReference>
<dbReference type="PANTHER" id="PTHR23389:SF9">
    <property type="entry name" value="DNA LIGASE"/>
    <property type="match status" value="1"/>
</dbReference>
<dbReference type="Pfam" id="PF00533">
    <property type="entry name" value="BRCT"/>
    <property type="match status" value="1"/>
</dbReference>
<dbReference type="Pfam" id="PF01653">
    <property type="entry name" value="DNA_ligase_aden"/>
    <property type="match status" value="1"/>
</dbReference>
<dbReference type="Pfam" id="PF03120">
    <property type="entry name" value="DNA_ligase_OB"/>
    <property type="match status" value="1"/>
</dbReference>
<dbReference type="Pfam" id="PF03119">
    <property type="entry name" value="DNA_ligase_ZBD"/>
    <property type="match status" value="1"/>
</dbReference>
<dbReference type="Pfam" id="PF12826">
    <property type="entry name" value="HHH_2"/>
    <property type="match status" value="1"/>
</dbReference>
<dbReference type="Pfam" id="PF14520">
    <property type="entry name" value="HHH_5"/>
    <property type="match status" value="1"/>
</dbReference>
<dbReference type="Pfam" id="PF22745">
    <property type="entry name" value="Nlig-Ia"/>
    <property type="match status" value="1"/>
</dbReference>
<dbReference type="PIRSF" id="PIRSF001604">
    <property type="entry name" value="LigA"/>
    <property type="match status" value="1"/>
</dbReference>
<dbReference type="SMART" id="SM00292">
    <property type="entry name" value="BRCT"/>
    <property type="match status" value="1"/>
</dbReference>
<dbReference type="SMART" id="SM00278">
    <property type="entry name" value="HhH1"/>
    <property type="match status" value="3"/>
</dbReference>
<dbReference type="SMART" id="SM00532">
    <property type="entry name" value="LIGANc"/>
    <property type="match status" value="1"/>
</dbReference>
<dbReference type="SUPFAM" id="SSF52113">
    <property type="entry name" value="BRCT domain"/>
    <property type="match status" value="1"/>
</dbReference>
<dbReference type="SUPFAM" id="SSF56091">
    <property type="entry name" value="DNA ligase/mRNA capping enzyme, catalytic domain"/>
    <property type="match status" value="1"/>
</dbReference>
<dbReference type="SUPFAM" id="SSF50249">
    <property type="entry name" value="Nucleic acid-binding proteins"/>
    <property type="match status" value="1"/>
</dbReference>
<dbReference type="SUPFAM" id="SSF47781">
    <property type="entry name" value="RuvA domain 2-like"/>
    <property type="match status" value="1"/>
</dbReference>
<dbReference type="PROSITE" id="PS50172">
    <property type="entry name" value="BRCT"/>
    <property type="match status" value="1"/>
</dbReference>
<dbReference type="PROSITE" id="PS01055">
    <property type="entry name" value="DNA_LIGASE_N1"/>
    <property type="match status" value="1"/>
</dbReference>
<dbReference type="PROSITE" id="PS01056">
    <property type="entry name" value="DNA_LIGASE_N2"/>
    <property type="match status" value="1"/>
</dbReference>
<accession>B1HTW6</accession>
<reference key="1">
    <citation type="journal article" date="2008" name="J. Bacteriol.">
        <title>Complete genome sequence of the mosquitocidal bacterium Bacillus sphaericus C3-41 and comparison with those of closely related Bacillus species.</title>
        <authorList>
            <person name="Hu X."/>
            <person name="Fan W."/>
            <person name="Han B."/>
            <person name="Liu H."/>
            <person name="Zheng D."/>
            <person name="Li Q."/>
            <person name="Dong W."/>
            <person name="Yan J."/>
            <person name="Gao M."/>
            <person name="Berry C."/>
            <person name="Yuan Z."/>
        </authorList>
    </citation>
    <scope>NUCLEOTIDE SEQUENCE [LARGE SCALE GENOMIC DNA]</scope>
    <source>
        <strain>C3-41</strain>
    </source>
</reference>
<organism>
    <name type="scientific">Lysinibacillus sphaericus (strain C3-41)</name>
    <dbReference type="NCBI Taxonomy" id="444177"/>
    <lineage>
        <taxon>Bacteria</taxon>
        <taxon>Bacillati</taxon>
        <taxon>Bacillota</taxon>
        <taxon>Bacilli</taxon>
        <taxon>Bacillales</taxon>
        <taxon>Bacillaceae</taxon>
        <taxon>Lysinibacillus</taxon>
    </lineage>
</organism>
<keyword id="KW-0227">DNA damage</keyword>
<keyword id="KW-0234">DNA repair</keyword>
<keyword id="KW-0235">DNA replication</keyword>
<keyword id="KW-0436">Ligase</keyword>
<keyword id="KW-0460">Magnesium</keyword>
<keyword id="KW-0464">Manganese</keyword>
<keyword id="KW-0479">Metal-binding</keyword>
<keyword id="KW-0520">NAD</keyword>
<keyword id="KW-0862">Zinc</keyword>
<feature type="chain" id="PRO_0000380412" description="DNA ligase">
    <location>
        <begin position="1"/>
        <end position="667"/>
    </location>
</feature>
<feature type="domain" description="BRCT" evidence="1">
    <location>
        <begin position="588"/>
        <end position="667"/>
    </location>
</feature>
<feature type="active site" description="N6-AMP-lysine intermediate" evidence="1">
    <location>
        <position position="113"/>
    </location>
</feature>
<feature type="binding site" evidence="1">
    <location>
        <begin position="32"/>
        <end position="36"/>
    </location>
    <ligand>
        <name>NAD(+)</name>
        <dbReference type="ChEBI" id="CHEBI:57540"/>
    </ligand>
</feature>
<feature type="binding site" evidence="1">
    <location>
        <begin position="81"/>
        <end position="82"/>
    </location>
    <ligand>
        <name>NAD(+)</name>
        <dbReference type="ChEBI" id="CHEBI:57540"/>
    </ligand>
</feature>
<feature type="binding site" evidence="1">
    <location>
        <position position="111"/>
    </location>
    <ligand>
        <name>NAD(+)</name>
        <dbReference type="ChEBI" id="CHEBI:57540"/>
    </ligand>
</feature>
<feature type="binding site" evidence="1">
    <location>
        <position position="134"/>
    </location>
    <ligand>
        <name>NAD(+)</name>
        <dbReference type="ChEBI" id="CHEBI:57540"/>
    </ligand>
</feature>
<feature type="binding site" evidence="1">
    <location>
        <position position="168"/>
    </location>
    <ligand>
        <name>NAD(+)</name>
        <dbReference type="ChEBI" id="CHEBI:57540"/>
    </ligand>
</feature>
<feature type="binding site" evidence="1">
    <location>
        <position position="285"/>
    </location>
    <ligand>
        <name>NAD(+)</name>
        <dbReference type="ChEBI" id="CHEBI:57540"/>
    </ligand>
</feature>
<feature type="binding site" evidence="1">
    <location>
        <position position="309"/>
    </location>
    <ligand>
        <name>NAD(+)</name>
        <dbReference type="ChEBI" id="CHEBI:57540"/>
    </ligand>
</feature>
<feature type="binding site" evidence="1">
    <location>
        <position position="403"/>
    </location>
    <ligand>
        <name>Zn(2+)</name>
        <dbReference type="ChEBI" id="CHEBI:29105"/>
    </ligand>
</feature>
<feature type="binding site" evidence="1">
    <location>
        <position position="406"/>
    </location>
    <ligand>
        <name>Zn(2+)</name>
        <dbReference type="ChEBI" id="CHEBI:29105"/>
    </ligand>
</feature>
<feature type="binding site" evidence="1">
    <location>
        <position position="421"/>
    </location>
    <ligand>
        <name>Zn(2+)</name>
        <dbReference type="ChEBI" id="CHEBI:29105"/>
    </ligand>
</feature>
<feature type="binding site" evidence="1">
    <location>
        <position position="426"/>
    </location>
    <ligand>
        <name>Zn(2+)</name>
        <dbReference type="ChEBI" id="CHEBI:29105"/>
    </ligand>
</feature>